<evidence type="ECO:0000255" key="1">
    <source>
        <dbReference type="HAMAP-Rule" id="MF_00222"/>
    </source>
</evidence>
<dbReference type="EC" id="1.1.1.25" evidence="1"/>
<dbReference type="EMBL" id="CP000243">
    <property type="protein sequence ID" value="ABE09163.1"/>
    <property type="molecule type" value="Genomic_DNA"/>
</dbReference>
<dbReference type="RefSeq" id="WP_000451230.1">
    <property type="nucleotide sequence ID" value="NZ_CP064825.1"/>
</dbReference>
<dbReference type="SMR" id="Q1R651"/>
<dbReference type="KEGG" id="eci:UTI89_C3726"/>
<dbReference type="HOGENOM" id="CLU_044063_2_1_6"/>
<dbReference type="UniPathway" id="UPA00053">
    <property type="reaction ID" value="UER00087"/>
</dbReference>
<dbReference type="Proteomes" id="UP000001952">
    <property type="component" value="Chromosome"/>
</dbReference>
<dbReference type="GO" id="GO:0005829">
    <property type="term" value="C:cytosol"/>
    <property type="evidence" value="ECO:0007669"/>
    <property type="project" value="TreeGrafter"/>
</dbReference>
<dbReference type="GO" id="GO:0050661">
    <property type="term" value="F:NADP binding"/>
    <property type="evidence" value="ECO:0007669"/>
    <property type="project" value="InterPro"/>
</dbReference>
<dbReference type="GO" id="GO:0004764">
    <property type="term" value="F:shikimate 3-dehydrogenase (NADP+) activity"/>
    <property type="evidence" value="ECO:0007669"/>
    <property type="project" value="UniProtKB-UniRule"/>
</dbReference>
<dbReference type="GO" id="GO:0008652">
    <property type="term" value="P:amino acid biosynthetic process"/>
    <property type="evidence" value="ECO:0007669"/>
    <property type="project" value="UniProtKB-KW"/>
</dbReference>
<dbReference type="GO" id="GO:0009073">
    <property type="term" value="P:aromatic amino acid family biosynthetic process"/>
    <property type="evidence" value="ECO:0007669"/>
    <property type="project" value="UniProtKB-KW"/>
</dbReference>
<dbReference type="GO" id="GO:0009423">
    <property type="term" value="P:chorismate biosynthetic process"/>
    <property type="evidence" value="ECO:0007669"/>
    <property type="project" value="UniProtKB-UniRule"/>
</dbReference>
<dbReference type="GO" id="GO:0019632">
    <property type="term" value="P:shikimate metabolic process"/>
    <property type="evidence" value="ECO:0007669"/>
    <property type="project" value="InterPro"/>
</dbReference>
<dbReference type="CDD" id="cd01065">
    <property type="entry name" value="NAD_bind_Shikimate_DH"/>
    <property type="match status" value="1"/>
</dbReference>
<dbReference type="FunFam" id="3.40.50.10860:FF:000006">
    <property type="entry name" value="Shikimate dehydrogenase (NADP(+))"/>
    <property type="match status" value="1"/>
</dbReference>
<dbReference type="FunFam" id="3.40.50.720:FF:000104">
    <property type="entry name" value="Shikimate dehydrogenase (NADP(+))"/>
    <property type="match status" value="1"/>
</dbReference>
<dbReference type="Gene3D" id="3.40.50.10860">
    <property type="entry name" value="Leucine Dehydrogenase, chain A, domain 1"/>
    <property type="match status" value="1"/>
</dbReference>
<dbReference type="Gene3D" id="3.40.50.720">
    <property type="entry name" value="NAD(P)-binding Rossmann-like Domain"/>
    <property type="match status" value="1"/>
</dbReference>
<dbReference type="HAMAP" id="MF_00222">
    <property type="entry name" value="Shikimate_DH_AroE"/>
    <property type="match status" value="1"/>
</dbReference>
<dbReference type="InterPro" id="IPR046346">
    <property type="entry name" value="Aminoacid_DH-like_N_sf"/>
</dbReference>
<dbReference type="InterPro" id="IPR036291">
    <property type="entry name" value="NAD(P)-bd_dom_sf"/>
</dbReference>
<dbReference type="InterPro" id="IPR041121">
    <property type="entry name" value="SDH_C"/>
</dbReference>
<dbReference type="InterPro" id="IPR011342">
    <property type="entry name" value="Shikimate_DH"/>
</dbReference>
<dbReference type="InterPro" id="IPR013708">
    <property type="entry name" value="Shikimate_DH-bd_N"/>
</dbReference>
<dbReference type="InterPro" id="IPR022893">
    <property type="entry name" value="Shikimate_DH_fam"/>
</dbReference>
<dbReference type="InterPro" id="IPR006151">
    <property type="entry name" value="Shikm_DH/Glu-tRNA_Rdtase"/>
</dbReference>
<dbReference type="NCBIfam" id="TIGR00507">
    <property type="entry name" value="aroE"/>
    <property type="match status" value="1"/>
</dbReference>
<dbReference type="NCBIfam" id="NF001310">
    <property type="entry name" value="PRK00258.1-2"/>
    <property type="match status" value="1"/>
</dbReference>
<dbReference type="PANTHER" id="PTHR21089:SF1">
    <property type="entry name" value="BIFUNCTIONAL 3-DEHYDROQUINATE DEHYDRATASE_SHIKIMATE DEHYDROGENASE, CHLOROPLASTIC"/>
    <property type="match status" value="1"/>
</dbReference>
<dbReference type="PANTHER" id="PTHR21089">
    <property type="entry name" value="SHIKIMATE DEHYDROGENASE"/>
    <property type="match status" value="1"/>
</dbReference>
<dbReference type="Pfam" id="PF18317">
    <property type="entry name" value="SDH_C"/>
    <property type="match status" value="1"/>
</dbReference>
<dbReference type="Pfam" id="PF01488">
    <property type="entry name" value="Shikimate_DH"/>
    <property type="match status" value="1"/>
</dbReference>
<dbReference type="Pfam" id="PF08501">
    <property type="entry name" value="Shikimate_dh_N"/>
    <property type="match status" value="1"/>
</dbReference>
<dbReference type="SUPFAM" id="SSF53223">
    <property type="entry name" value="Aminoacid dehydrogenase-like, N-terminal domain"/>
    <property type="match status" value="1"/>
</dbReference>
<dbReference type="SUPFAM" id="SSF51735">
    <property type="entry name" value="NAD(P)-binding Rossmann-fold domains"/>
    <property type="match status" value="1"/>
</dbReference>
<proteinExistence type="inferred from homology"/>
<gene>
    <name evidence="1" type="primary">aroE</name>
    <name type="ordered locus">UTI89_C3726</name>
</gene>
<protein>
    <recommendedName>
        <fullName evidence="1">Shikimate dehydrogenase (NADP(+))</fullName>
        <shortName evidence="1">SDH</shortName>
        <ecNumber evidence="1">1.1.1.25</ecNumber>
    </recommendedName>
</protein>
<keyword id="KW-0028">Amino-acid biosynthesis</keyword>
<keyword id="KW-0057">Aromatic amino acid biosynthesis</keyword>
<keyword id="KW-0521">NADP</keyword>
<keyword id="KW-0560">Oxidoreductase</keyword>
<feature type="chain" id="PRO_1000021283" description="Shikimate dehydrogenase (NADP(+))">
    <location>
        <begin position="1"/>
        <end position="272"/>
    </location>
</feature>
<feature type="active site" description="Proton acceptor" evidence="1">
    <location>
        <position position="65"/>
    </location>
</feature>
<feature type="binding site" evidence="1">
    <location>
        <begin position="14"/>
        <end position="16"/>
    </location>
    <ligand>
        <name>shikimate</name>
        <dbReference type="ChEBI" id="CHEBI:36208"/>
    </ligand>
</feature>
<feature type="binding site" evidence="1">
    <location>
        <position position="61"/>
    </location>
    <ligand>
        <name>shikimate</name>
        <dbReference type="ChEBI" id="CHEBI:36208"/>
    </ligand>
</feature>
<feature type="binding site" evidence="1">
    <location>
        <position position="77"/>
    </location>
    <ligand>
        <name>NADP(+)</name>
        <dbReference type="ChEBI" id="CHEBI:58349"/>
    </ligand>
</feature>
<feature type="binding site" evidence="1">
    <location>
        <position position="86"/>
    </location>
    <ligand>
        <name>shikimate</name>
        <dbReference type="ChEBI" id="CHEBI:36208"/>
    </ligand>
</feature>
<feature type="binding site" evidence="1">
    <location>
        <position position="102"/>
    </location>
    <ligand>
        <name>shikimate</name>
        <dbReference type="ChEBI" id="CHEBI:36208"/>
    </ligand>
</feature>
<feature type="binding site" evidence="1">
    <location>
        <begin position="126"/>
        <end position="130"/>
    </location>
    <ligand>
        <name>NADP(+)</name>
        <dbReference type="ChEBI" id="CHEBI:58349"/>
    </ligand>
</feature>
<feature type="binding site" evidence="1">
    <location>
        <begin position="149"/>
        <end position="154"/>
    </location>
    <ligand>
        <name>NADP(+)</name>
        <dbReference type="ChEBI" id="CHEBI:58349"/>
    </ligand>
</feature>
<feature type="binding site" evidence="1">
    <location>
        <position position="213"/>
    </location>
    <ligand>
        <name>NADP(+)</name>
        <dbReference type="ChEBI" id="CHEBI:58349"/>
    </ligand>
</feature>
<feature type="binding site" evidence="1">
    <location>
        <position position="215"/>
    </location>
    <ligand>
        <name>shikimate</name>
        <dbReference type="ChEBI" id="CHEBI:36208"/>
    </ligand>
</feature>
<feature type="binding site" evidence="1">
    <location>
        <position position="237"/>
    </location>
    <ligand>
        <name>NADP(+)</name>
        <dbReference type="ChEBI" id="CHEBI:58349"/>
    </ligand>
</feature>
<name>AROE_ECOUT</name>
<organism>
    <name type="scientific">Escherichia coli (strain UTI89 / UPEC)</name>
    <dbReference type="NCBI Taxonomy" id="364106"/>
    <lineage>
        <taxon>Bacteria</taxon>
        <taxon>Pseudomonadati</taxon>
        <taxon>Pseudomonadota</taxon>
        <taxon>Gammaproteobacteria</taxon>
        <taxon>Enterobacterales</taxon>
        <taxon>Enterobacteriaceae</taxon>
        <taxon>Escherichia</taxon>
    </lineage>
</organism>
<accession>Q1R651</accession>
<sequence length="272" mass="29409">METYAVFGNPIAHSKSPFIHQQFAQQLNIEHPYGRVLAPINDFINTLNAFFSAGGKGANVTVPFKEEAFARADELTERAALAGAVNTLKRLEDGRLLGDNTDGIGLLSDLERLSFIRPGLRILLIGAGGASRGVLLPLLSLDCAVTITNRTVSRAEELTKLFAHTGSIQALGMDELEGHEFDLIINATSSGISGDIPAIPSSLIHPGIYCYDMFYQKGKTPFLAWCEQRGSKRNADGLGMLVAQAAHAFLLWHGVLPDVEPVIKLLQQELSA</sequence>
<reference key="1">
    <citation type="journal article" date="2006" name="Proc. Natl. Acad. Sci. U.S.A.">
        <title>Identification of genes subject to positive selection in uropathogenic strains of Escherichia coli: a comparative genomics approach.</title>
        <authorList>
            <person name="Chen S.L."/>
            <person name="Hung C.-S."/>
            <person name="Xu J."/>
            <person name="Reigstad C.S."/>
            <person name="Magrini V."/>
            <person name="Sabo A."/>
            <person name="Blasiar D."/>
            <person name="Bieri T."/>
            <person name="Meyer R.R."/>
            <person name="Ozersky P."/>
            <person name="Armstrong J.R."/>
            <person name="Fulton R.S."/>
            <person name="Latreille J.P."/>
            <person name="Spieth J."/>
            <person name="Hooton T.M."/>
            <person name="Mardis E.R."/>
            <person name="Hultgren S.J."/>
            <person name="Gordon J.I."/>
        </authorList>
    </citation>
    <scope>NUCLEOTIDE SEQUENCE [LARGE SCALE GENOMIC DNA]</scope>
    <source>
        <strain>UTI89 / UPEC</strain>
    </source>
</reference>
<comment type="function">
    <text evidence="1">Involved in the biosynthesis of the chorismate, which leads to the biosynthesis of aromatic amino acids. Catalyzes the reversible NADPH linked reduction of 3-dehydroshikimate (DHSA) to yield shikimate (SA).</text>
</comment>
<comment type="catalytic activity">
    <reaction evidence="1">
        <text>shikimate + NADP(+) = 3-dehydroshikimate + NADPH + H(+)</text>
        <dbReference type="Rhea" id="RHEA:17737"/>
        <dbReference type="ChEBI" id="CHEBI:15378"/>
        <dbReference type="ChEBI" id="CHEBI:16630"/>
        <dbReference type="ChEBI" id="CHEBI:36208"/>
        <dbReference type="ChEBI" id="CHEBI:57783"/>
        <dbReference type="ChEBI" id="CHEBI:58349"/>
        <dbReference type="EC" id="1.1.1.25"/>
    </reaction>
</comment>
<comment type="pathway">
    <text evidence="1">Metabolic intermediate biosynthesis; chorismate biosynthesis; chorismate from D-erythrose 4-phosphate and phosphoenolpyruvate: step 4/7.</text>
</comment>
<comment type="subunit">
    <text evidence="1">Homodimer.</text>
</comment>
<comment type="similarity">
    <text evidence="1">Belongs to the shikimate dehydrogenase family.</text>
</comment>